<keyword id="KW-0312">Gluconeogenesis</keyword>
<keyword id="KW-0324">Glycolysis</keyword>
<keyword id="KW-0413">Isomerase</keyword>
<organism>
    <name type="scientific">Caulobacter sp. (strain K31)</name>
    <dbReference type="NCBI Taxonomy" id="366602"/>
    <lineage>
        <taxon>Bacteria</taxon>
        <taxon>Pseudomonadati</taxon>
        <taxon>Pseudomonadota</taxon>
        <taxon>Alphaproteobacteria</taxon>
        <taxon>Caulobacterales</taxon>
        <taxon>Caulobacteraceae</taxon>
        <taxon>Caulobacter</taxon>
    </lineage>
</organism>
<evidence type="ECO:0000255" key="1">
    <source>
        <dbReference type="HAMAP-Rule" id="MF_01039"/>
    </source>
</evidence>
<reference key="1">
    <citation type="submission" date="2008-01" db="EMBL/GenBank/DDBJ databases">
        <title>Complete sequence of chromosome of Caulobacter sp. K31.</title>
        <authorList>
            <consortium name="US DOE Joint Genome Institute"/>
            <person name="Copeland A."/>
            <person name="Lucas S."/>
            <person name="Lapidus A."/>
            <person name="Barry K."/>
            <person name="Glavina del Rio T."/>
            <person name="Dalin E."/>
            <person name="Tice H."/>
            <person name="Pitluck S."/>
            <person name="Bruce D."/>
            <person name="Goodwin L."/>
            <person name="Thompson L.S."/>
            <person name="Brettin T."/>
            <person name="Detter J.C."/>
            <person name="Han C."/>
            <person name="Schmutz J."/>
            <person name="Larimer F."/>
            <person name="Land M."/>
            <person name="Hauser L."/>
            <person name="Kyrpides N."/>
            <person name="Kim E."/>
            <person name="Stephens C."/>
            <person name="Richardson P."/>
        </authorList>
    </citation>
    <scope>NUCLEOTIDE SEQUENCE [LARGE SCALE GENOMIC DNA]</scope>
    <source>
        <strain>K31</strain>
    </source>
</reference>
<comment type="function">
    <text evidence="1">Catalyzes the interconversion of 2-phosphoglycerate and 3-phosphoglycerate.</text>
</comment>
<comment type="catalytic activity">
    <reaction evidence="1">
        <text>(2R)-2-phosphoglycerate = (2R)-3-phosphoglycerate</text>
        <dbReference type="Rhea" id="RHEA:15901"/>
        <dbReference type="ChEBI" id="CHEBI:58272"/>
        <dbReference type="ChEBI" id="CHEBI:58289"/>
        <dbReference type="EC" id="5.4.2.11"/>
    </reaction>
</comment>
<comment type="pathway">
    <text evidence="1">Carbohydrate degradation; glycolysis; pyruvate from D-glyceraldehyde 3-phosphate: step 3/5.</text>
</comment>
<comment type="subunit">
    <text evidence="1">Homodimer.</text>
</comment>
<comment type="similarity">
    <text evidence="1">Belongs to the phosphoglycerate mutase family. BPG-dependent PGAM subfamily.</text>
</comment>
<proteinExistence type="inferred from homology"/>
<protein>
    <recommendedName>
        <fullName evidence="1">2,3-bisphosphoglycerate-dependent phosphoglycerate mutase</fullName>
        <shortName evidence="1">BPG-dependent PGAM</shortName>
        <shortName evidence="1">PGAM</shortName>
        <shortName evidence="1">Phosphoglyceromutase</shortName>
        <shortName evidence="1">dPGM</shortName>
        <ecNumber evidence="1">5.4.2.11</ecNumber>
    </recommendedName>
</protein>
<accession>B0SY17</accession>
<dbReference type="EC" id="5.4.2.11" evidence="1"/>
<dbReference type="EMBL" id="CP000927">
    <property type="protein sequence ID" value="ABZ70340.1"/>
    <property type="molecule type" value="Genomic_DNA"/>
</dbReference>
<dbReference type="SMR" id="B0SY17"/>
<dbReference type="STRING" id="366602.Caul_1210"/>
<dbReference type="KEGG" id="cak:Caul_1210"/>
<dbReference type="eggNOG" id="COG0588">
    <property type="taxonomic scope" value="Bacteria"/>
</dbReference>
<dbReference type="HOGENOM" id="CLU_033323_1_1_5"/>
<dbReference type="OrthoDB" id="9781415at2"/>
<dbReference type="UniPathway" id="UPA00109">
    <property type="reaction ID" value="UER00186"/>
</dbReference>
<dbReference type="GO" id="GO:0004619">
    <property type="term" value="F:phosphoglycerate mutase activity"/>
    <property type="evidence" value="ECO:0007669"/>
    <property type="project" value="UniProtKB-EC"/>
</dbReference>
<dbReference type="GO" id="GO:0006094">
    <property type="term" value="P:gluconeogenesis"/>
    <property type="evidence" value="ECO:0007669"/>
    <property type="project" value="UniProtKB-UniRule"/>
</dbReference>
<dbReference type="GO" id="GO:0006096">
    <property type="term" value="P:glycolytic process"/>
    <property type="evidence" value="ECO:0007669"/>
    <property type="project" value="UniProtKB-UniRule"/>
</dbReference>
<dbReference type="CDD" id="cd07067">
    <property type="entry name" value="HP_PGM_like"/>
    <property type="match status" value="1"/>
</dbReference>
<dbReference type="FunFam" id="3.40.50.1240:FF:000003">
    <property type="entry name" value="2,3-bisphosphoglycerate-dependent phosphoglycerate mutase"/>
    <property type="match status" value="1"/>
</dbReference>
<dbReference type="Gene3D" id="3.40.50.1240">
    <property type="entry name" value="Phosphoglycerate mutase-like"/>
    <property type="match status" value="1"/>
</dbReference>
<dbReference type="HAMAP" id="MF_01039">
    <property type="entry name" value="PGAM_GpmA"/>
    <property type="match status" value="1"/>
</dbReference>
<dbReference type="InterPro" id="IPR013078">
    <property type="entry name" value="His_Pase_superF_clade-1"/>
</dbReference>
<dbReference type="InterPro" id="IPR029033">
    <property type="entry name" value="His_PPase_superfam"/>
</dbReference>
<dbReference type="InterPro" id="IPR001345">
    <property type="entry name" value="PG/BPGM_mutase_AS"/>
</dbReference>
<dbReference type="InterPro" id="IPR005952">
    <property type="entry name" value="Phosphogly_mut1"/>
</dbReference>
<dbReference type="NCBIfam" id="TIGR01258">
    <property type="entry name" value="pgm_1"/>
    <property type="match status" value="1"/>
</dbReference>
<dbReference type="NCBIfam" id="NF010713">
    <property type="entry name" value="PRK14115.1"/>
    <property type="match status" value="1"/>
</dbReference>
<dbReference type="PANTHER" id="PTHR11931">
    <property type="entry name" value="PHOSPHOGLYCERATE MUTASE"/>
    <property type="match status" value="1"/>
</dbReference>
<dbReference type="Pfam" id="PF00300">
    <property type="entry name" value="His_Phos_1"/>
    <property type="match status" value="1"/>
</dbReference>
<dbReference type="PIRSF" id="PIRSF000709">
    <property type="entry name" value="6PFK_2-Ptase"/>
    <property type="match status" value="1"/>
</dbReference>
<dbReference type="SMART" id="SM00855">
    <property type="entry name" value="PGAM"/>
    <property type="match status" value="1"/>
</dbReference>
<dbReference type="SUPFAM" id="SSF53254">
    <property type="entry name" value="Phosphoglycerate mutase-like"/>
    <property type="match status" value="1"/>
</dbReference>
<dbReference type="PROSITE" id="PS00175">
    <property type="entry name" value="PG_MUTASE"/>
    <property type="match status" value="1"/>
</dbReference>
<name>GPMA_CAUSK</name>
<feature type="chain" id="PRO_1000084320" description="2,3-bisphosphoglycerate-dependent phosphoglycerate mutase">
    <location>
        <begin position="1"/>
        <end position="237"/>
    </location>
</feature>
<feature type="active site" description="Tele-phosphohistidine intermediate" evidence="1">
    <location>
        <position position="9"/>
    </location>
</feature>
<feature type="active site" description="Proton donor/acceptor" evidence="1">
    <location>
        <position position="87"/>
    </location>
</feature>
<feature type="binding site" evidence="1">
    <location>
        <begin position="8"/>
        <end position="15"/>
    </location>
    <ligand>
        <name>substrate</name>
    </ligand>
</feature>
<feature type="binding site" evidence="1">
    <location>
        <begin position="21"/>
        <end position="22"/>
    </location>
    <ligand>
        <name>substrate</name>
    </ligand>
</feature>
<feature type="binding site" evidence="1">
    <location>
        <position position="60"/>
    </location>
    <ligand>
        <name>substrate</name>
    </ligand>
</feature>
<feature type="binding site" evidence="1">
    <location>
        <begin position="87"/>
        <end position="90"/>
    </location>
    <ligand>
        <name>substrate</name>
    </ligand>
</feature>
<feature type="binding site" evidence="1">
    <location>
        <position position="98"/>
    </location>
    <ligand>
        <name>substrate</name>
    </ligand>
</feature>
<feature type="binding site" evidence="1">
    <location>
        <begin position="114"/>
        <end position="115"/>
    </location>
    <ligand>
        <name>substrate</name>
    </ligand>
</feature>
<feature type="binding site" evidence="1">
    <location>
        <begin position="180"/>
        <end position="181"/>
    </location>
    <ligand>
        <name>substrate</name>
    </ligand>
</feature>
<feature type="site" description="Transition state stabilizer" evidence="1">
    <location>
        <position position="179"/>
    </location>
</feature>
<sequence>MPVLVLLRHGQSQWNLENRFTGWVDVDLTAEGEAQARKGGELIKAAGINLDEAFTSVQTRAIRTGNLALDAAGQSFVPVTKDWRLNERHYGGLTGLNKAETAQKHGEEQVTIWRRSYDIPPPPLAPGGEYDFGKDRRYAGKDLPDTESLKTTLTRVLPYWETAIAPKLKAGETILVAAHGNSLRAIVKHLFDVPDDKIVHVEIPTGNPLVIDLDADLKPTGARYLDAARAQPLPAVG</sequence>
<gene>
    <name evidence="1" type="primary">gpmA</name>
    <name type="ordered locus">Caul_1210</name>
</gene>